<organism>
    <name type="scientific">Arabidopsis thaliana</name>
    <name type="common">Mouse-ear cress</name>
    <dbReference type="NCBI Taxonomy" id="3702"/>
    <lineage>
        <taxon>Eukaryota</taxon>
        <taxon>Viridiplantae</taxon>
        <taxon>Streptophyta</taxon>
        <taxon>Embryophyta</taxon>
        <taxon>Tracheophyta</taxon>
        <taxon>Spermatophyta</taxon>
        <taxon>Magnoliopsida</taxon>
        <taxon>eudicotyledons</taxon>
        <taxon>Gunneridae</taxon>
        <taxon>Pentapetalae</taxon>
        <taxon>rosids</taxon>
        <taxon>malvids</taxon>
        <taxon>Brassicales</taxon>
        <taxon>Brassicaceae</taxon>
        <taxon>Camelineae</taxon>
        <taxon>Arabidopsis</taxon>
    </lineage>
</organism>
<dbReference type="EMBL" id="AC010852">
    <property type="protein sequence ID" value="AAG52457.1"/>
    <property type="molecule type" value="Genomic_DNA"/>
</dbReference>
<dbReference type="EMBL" id="CP002684">
    <property type="protein sequence ID" value="AEE34167.1"/>
    <property type="molecule type" value="Genomic_DNA"/>
</dbReference>
<dbReference type="EMBL" id="AK221458">
    <property type="protein sequence ID" value="BAD94543.1"/>
    <property type="molecule type" value="mRNA"/>
</dbReference>
<dbReference type="EMBL" id="BT023455">
    <property type="protein sequence ID" value="AAY56446.1"/>
    <property type="molecule type" value="mRNA"/>
</dbReference>
<dbReference type="EMBL" id="BT029011">
    <property type="protein sequence ID" value="ABI93920.1"/>
    <property type="molecule type" value="mRNA"/>
</dbReference>
<dbReference type="PIR" id="D96664">
    <property type="entry name" value="D96664"/>
</dbReference>
<dbReference type="RefSeq" id="NP_176576.1">
    <property type="nucleotide sequence ID" value="NM_105066.3"/>
</dbReference>
<dbReference type="SMR" id="Q9CAK4"/>
<dbReference type="FunCoup" id="Q9CAK4">
    <property type="interactions" value="133"/>
</dbReference>
<dbReference type="IntAct" id="Q9CAK4">
    <property type="interactions" value="1"/>
</dbReference>
<dbReference type="STRING" id="3702.Q9CAK4"/>
<dbReference type="GlyCosmos" id="Q9CAK4">
    <property type="glycosylation" value="3 sites, No reported glycans"/>
</dbReference>
<dbReference type="iPTMnet" id="Q9CAK4"/>
<dbReference type="PaxDb" id="3702-AT1G63930.1"/>
<dbReference type="ProteomicsDB" id="177728"/>
<dbReference type="EnsemblPlants" id="AT1G63930.1">
    <property type="protein sequence ID" value="AT1G63930.1"/>
    <property type="gene ID" value="AT1G63930"/>
</dbReference>
<dbReference type="GeneID" id="842696"/>
<dbReference type="Gramene" id="AT1G63930.1">
    <property type="protein sequence ID" value="AT1G63930.1"/>
    <property type="gene ID" value="AT1G63930"/>
</dbReference>
<dbReference type="KEGG" id="ath:AT1G63930"/>
<dbReference type="Araport" id="AT1G63930"/>
<dbReference type="TAIR" id="AT1G63930">
    <property type="gene designation" value="ROH1"/>
</dbReference>
<dbReference type="eggNOG" id="ENOG502QUJZ">
    <property type="taxonomic scope" value="Eukaryota"/>
</dbReference>
<dbReference type="HOGENOM" id="CLU_060027_0_0_1"/>
<dbReference type="InParanoid" id="Q9CAK4"/>
<dbReference type="OMA" id="LVRHWQK"/>
<dbReference type="PhylomeDB" id="Q9CAK4"/>
<dbReference type="PRO" id="PR:Q9CAK4"/>
<dbReference type="Proteomes" id="UP000006548">
    <property type="component" value="Chromosome 1"/>
</dbReference>
<dbReference type="ExpressionAtlas" id="Q9CAK4">
    <property type="expression patterns" value="baseline and differential"/>
</dbReference>
<dbReference type="GO" id="GO:0005829">
    <property type="term" value="C:cytosol"/>
    <property type="evidence" value="ECO:0007669"/>
    <property type="project" value="UniProtKB-SubCell"/>
</dbReference>
<dbReference type="GO" id="GO:0016020">
    <property type="term" value="C:membrane"/>
    <property type="evidence" value="ECO:0007669"/>
    <property type="project" value="UniProtKB-SubCell"/>
</dbReference>
<dbReference type="GO" id="GO:0048354">
    <property type="term" value="P:mucilage biosynthetic process involved in seed coat development"/>
    <property type="evidence" value="ECO:0000315"/>
    <property type="project" value="TAIR"/>
</dbReference>
<dbReference type="GO" id="GO:0010214">
    <property type="term" value="P:seed coat development"/>
    <property type="evidence" value="ECO:0000315"/>
    <property type="project" value="TAIR"/>
</dbReference>
<dbReference type="InterPro" id="IPR008511">
    <property type="entry name" value="ROH1-like"/>
</dbReference>
<dbReference type="PANTHER" id="PTHR31509">
    <property type="entry name" value="BPS1-LIKE PROTEIN"/>
    <property type="match status" value="1"/>
</dbReference>
<dbReference type="Pfam" id="PF05633">
    <property type="entry name" value="ROH1-like"/>
    <property type="match status" value="1"/>
</dbReference>
<reference key="1">
    <citation type="journal article" date="2000" name="Nature">
        <title>Sequence and analysis of chromosome 1 of the plant Arabidopsis thaliana.</title>
        <authorList>
            <person name="Theologis A."/>
            <person name="Ecker J.R."/>
            <person name="Palm C.J."/>
            <person name="Federspiel N.A."/>
            <person name="Kaul S."/>
            <person name="White O."/>
            <person name="Alonso J."/>
            <person name="Altafi H."/>
            <person name="Araujo R."/>
            <person name="Bowman C.L."/>
            <person name="Brooks S.Y."/>
            <person name="Buehler E."/>
            <person name="Chan A."/>
            <person name="Chao Q."/>
            <person name="Chen H."/>
            <person name="Cheuk R.F."/>
            <person name="Chin C.W."/>
            <person name="Chung M.K."/>
            <person name="Conn L."/>
            <person name="Conway A.B."/>
            <person name="Conway A.R."/>
            <person name="Creasy T.H."/>
            <person name="Dewar K."/>
            <person name="Dunn P."/>
            <person name="Etgu P."/>
            <person name="Feldblyum T.V."/>
            <person name="Feng J.-D."/>
            <person name="Fong B."/>
            <person name="Fujii C.Y."/>
            <person name="Gill J.E."/>
            <person name="Goldsmith A.D."/>
            <person name="Haas B."/>
            <person name="Hansen N.F."/>
            <person name="Hughes B."/>
            <person name="Huizar L."/>
            <person name="Hunter J.L."/>
            <person name="Jenkins J."/>
            <person name="Johnson-Hopson C."/>
            <person name="Khan S."/>
            <person name="Khaykin E."/>
            <person name="Kim C.J."/>
            <person name="Koo H.L."/>
            <person name="Kremenetskaia I."/>
            <person name="Kurtz D.B."/>
            <person name="Kwan A."/>
            <person name="Lam B."/>
            <person name="Langin-Hooper S."/>
            <person name="Lee A."/>
            <person name="Lee J.M."/>
            <person name="Lenz C.A."/>
            <person name="Li J.H."/>
            <person name="Li Y.-P."/>
            <person name="Lin X."/>
            <person name="Liu S.X."/>
            <person name="Liu Z.A."/>
            <person name="Luros J.S."/>
            <person name="Maiti R."/>
            <person name="Marziali A."/>
            <person name="Militscher J."/>
            <person name="Miranda M."/>
            <person name="Nguyen M."/>
            <person name="Nierman W.C."/>
            <person name="Osborne B.I."/>
            <person name="Pai G."/>
            <person name="Peterson J."/>
            <person name="Pham P.K."/>
            <person name="Rizzo M."/>
            <person name="Rooney T."/>
            <person name="Rowley D."/>
            <person name="Sakano H."/>
            <person name="Salzberg S.L."/>
            <person name="Schwartz J.R."/>
            <person name="Shinn P."/>
            <person name="Southwick A.M."/>
            <person name="Sun H."/>
            <person name="Tallon L.J."/>
            <person name="Tambunga G."/>
            <person name="Toriumi M.J."/>
            <person name="Town C.D."/>
            <person name="Utterback T."/>
            <person name="Van Aken S."/>
            <person name="Vaysberg M."/>
            <person name="Vysotskaia V.S."/>
            <person name="Walker M."/>
            <person name="Wu D."/>
            <person name="Yu G."/>
            <person name="Fraser C.M."/>
            <person name="Venter J.C."/>
            <person name="Davis R.W."/>
        </authorList>
    </citation>
    <scope>NUCLEOTIDE SEQUENCE [LARGE SCALE GENOMIC DNA]</scope>
    <source>
        <strain>cv. Columbia</strain>
    </source>
</reference>
<reference key="2">
    <citation type="journal article" date="2017" name="Plant J.">
        <title>Araport11: a complete reannotation of the Arabidopsis thaliana reference genome.</title>
        <authorList>
            <person name="Cheng C.Y."/>
            <person name="Krishnakumar V."/>
            <person name="Chan A.P."/>
            <person name="Thibaud-Nissen F."/>
            <person name="Schobel S."/>
            <person name="Town C.D."/>
        </authorList>
    </citation>
    <scope>GENOME REANNOTATION</scope>
    <source>
        <strain>cv. Columbia</strain>
    </source>
</reference>
<reference key="3">
    <citation type="submission" date="2005-03" db="EMBL/GenBank/DDBJ databases">
        <title>Large-scale analysis of RIKEN Arabidopsis full-length (RAFL) cDNAs.</title>
        <authorList>
            <person name="Totoki Y."/>
            <person name="Seki M."/>
            <person name="Ishida J."/>
            <person name="Nakajima M."/>
            <person name="Enju A."/>
            <person name="Kamiya A."/>
            <person name="Narusaka M."/>
            <person name="Shin-i T."/>
            <person name="Nakagawa M."/>
            <person name="Sakamoto N."/>
            <person name="Oishi K."/>
            <person name="Kohara Y."/>
            <person name="Kobayashi M."/>
            <person name="Toyoda A."/>
            <person name="Sakaki Y."/>
            <person name="Sakurai T."/>
            <person name="Iida K."/>
            <person name="Akiyama K."/>
            <person name="Satou M."/>
            <person name="Toyoda T."/>
            <person name="Konagaya A."/>
            <person name="Carninci P."/>
            <person name="Kawai J."/>
            <person name="Hayashizaki Y."/>
            <person name="Shinozaki K."/>
        </authorList>
    </citation>
    <scope>NUCLEOTIDE SEQUENCE [LARGE SCALE MRNA]</scope>
    <source>
        <strain>cv. Columbia</strain>
    </source>
</reference>
<reference key="4">
    <citation type="submission" date="2005-05" db="EMBL/GenBank/DDBJ databases">
        <title>Arabidopsis ORF clones.</title>
        <authorList>
            <person name="Cheuk R.F."/>
            <person name="Chen H."/>
            <person name="Kim C.J."/>
            <person name="Shinn P."/>
            <person name="Ecker J.R."/>
        </authorList>
    </citation>
    <scope>NUCLEOTIDE SEQUENCE [LARGE SCALE MRNA]</scope>
    <source>
        <strain>cv. Columbia</strain>
    </source>
</reference>
<reference key="5">
    <citation type="journal article" date="2010" name="New Phytol.">
        <title>Arabidopsis exocyst subunits SEC8 and EXO70A1 and exocyst interactor ROH1 are involved in the localized deposition of seed coat pectin.</title>
        <authorList>
            <person name="Kulich I."/>
            <person name="Cole R."/>
            <person name="Drdova E."/>
            <person name="Cvrckova F."/>
            <person name="Soukup A."/>
            <person name="Fowler J."/>
            <person name="Zarsky V."/>
        </authorList>
    </citation>
    <scope>FUNCTION</scope>
    <scope>DISRUPTION PHENOTYPE</scope>
    <scope>INTERACTION WITH EXO70A1 AND EXO70C1</scope>
    <scope>TISSUE SPECIFICITY</scope>
    <source>
        <strain>cv. Columbia</strain>
    </source>
</reference>
<reference key="6">
    <citation type="journal article" date="2017" name="Plant Physiol.">
        <title>EXO70C2 is a key regulatory factor for optimal tip growth of pollen.</title>
        <authorList>
            <person name="Synek L."/>
            <person name="Vukasinovic N."/>
            <person name="Kulich I."/>
            <person name="Hala M."/>
            <person name="Aldorfova K."/>
            <person name="Fendrych M."/>
            <person name="Zarsky V."/>
        </authorList>
    </citation>
    <scope>INTERACTION WITH EXO70C1 AND EXO70C2</scope>
    <source>
        <strain>cv. Columbia</strain>
        <strain>cv. Landsberg erecta</strain>
    </source>
</reference>
<reference key="7">
    <citation type="journal article" date="2020" name="Front. Plant Sci.">
        <title>Regulation of exocyst function in pollen tube growth by phosphorylation of exocyst subunit EXO70C2.</title>
        <authorList>
            <person name="Saccomanno A."/>
            <person name="Potocky M."/>
            <person name="Pejchar P."/>
            <person name="Hala M."/>
            <person name="Shikata H."/>
            <person name="Schwechheimer C."/>
            <person name="Zarsky V."/>
        </authorList>
    </citation>
    <scope>INTERACTION WITH EXO70C2</scope>
    <source>
        <strain>cv. Columbia</strain>
    </source>
</reference>
<sequence>MRPAQDNQGSFLGRISIRRNQFVDVNNEQEQEDLELFQKHIADRFTELLSPPQPPPSDEINTVASVAATEQIMSVTWLRKLMDVFLCCEAEFKAILLMGRDPTQISKPPFDRLVPEMLDRSIKALDICTAVVNGIDSVRHYQRLAEIAVTALEQRPLGDGNVRRAKRALANLVVALSLEDKENVSGGGGGGGGGNKTTERSWSFGRRSGGSSAASKGGATIGQLKSSSWAVGRNWSAAKQIHAMTANLTPPRGNEAAGLPQPMFIMSTVMVFVMWVLTAAVPCQERSGLANHLPVPPKHLNWAQSLIGIHEKIGDEWKKKEKKGSAGLMEEMTRMEKLGHSLMEFADGFHYPAEKDAAESAAVQVAEMAEICRRMEEELVPLQQQIREVFHRIVRSRAEILEVLEQAGKVSAPVV</sequence>
<protein>
    <recommendedName>
        <fullName evidence="8">Protein ROH1A</fullName>
    </recommendedName>
    <alternativeName>
        <fullName evidence="7">Protein ROH1</fullName>
    </alternativeName>
</protein>
<feature type="chain" id="PRO_0000448861" description="Protein ROH1A">
    <location>
        <begin position="1"/>
        <end position="415"/>
    </location>
</feature>
<feature type="transmembrane region" description="Helical" evidence="2">
    <location>
        <begin position="263"/>
        <end position="283"/>
    </location>
</feature>
<feature type="region of interest" description="Disordered" evidence="3">
    <location>
        <begin position="184"/>
        <end position="219"/>
    </location>
</feature>
<feature type="compositionally biased region" description="Gly residues" evidence="3">
    <location>
        <begin position="185"/>
        <end position="195"/>
    </location>
</feature>
<feature type="compositionally biased region" description="Low complexity" evidence="3">
    <location>
        <begin position="200"/>
        <end position="219"/>
    </location>
</feature>
<gene>
    <name evidence="8" type="primary">ROH1A</name>
    <name evidence="7" type="synonym">ROH1</name>
    <name evidence="11" type="ordered locus">At1g63930</name>
    <name evidence="12" type="ORF">T12P18.5</name>
</gene>
<proteinExistence type="evidence at protein level"/>
<accession>Q9CAK4</accession>
<comment type="function">
    <text evidence="4">Required for seed coat mucilage deposition.</text>
</comment>
<comment type="subunit">
    <text evidence="4 5 6">Interacts with EXO70A1 and EXO70C1 (PubMed:20618910, PubMed:28356503). Binds to EXO70C2 (PubMed:28356503, PubMed:33519861).</text>
</comment>
<comment type="subcellular location">
    <subcellularLocation>
        <location evidence="2">Membrane</location>
        <topology evidence="2">Single-pass membrane protein</topology>
    </subcellularLocation>
    <subcellularLocation>
        <location evidence="1">Cytoplasm</location>
        <location evidence="1">Cytosol</location>
    </subcellularLocation>
</comment>
<comment type="tissue specificity">
    <text evidence="4">Mainly expressed in cells expanding in a polar manner such as pollen and root hairs.</text>
</comment>
<comment type="disruption phenotype">
    <text evidence="4">Reduced pectin deposition leading to reduced seed coat mucilage thickness (PubMed:20618910). Characteristic pattern of pectin deposition to the corners of seed coat volcano cells (PubMed:20618910).</text>
</comment>
<comment type="miscellaneous">
    <text evidence="10">'Roh' means corner in Czech.</text>
</comment>
<comment type="similarity">
    <text evidence="9">Belongs to the ROH1 family.</text>
</comment>
<keyword id="KW-0963">Cytoplasm</keyword>
<keyword id="KW-0217">Developmental protein</keyword>
<keyword id="KW-0472">Membrane</keyword>
<keyword id="KW-1185">Reference proteome</keyword>
<keyword id="KW-0812">Transmembrane</keyword>
<keyword id="KW-1133">Transmembrane helix</keyword>
<name>ROH1A_ARATH</name>
<evidence type="ECO:0000250" key="1">
    <source>
        <dbReference type="UniProtKB" id="Q9CA69"/>
    </source>
</evidence>
<evidence type="ECO:0000255" key="2"/>
<evidence type="ECO:0000256" key="3">
    <source>
        <dbReference type="SAM" id="MobiDB-lite"/>
    </source>
</evidence>
<evidence type="ECO:0000269" key="4">
    <source>
    </source>
</evidence>
<evidence type="ECO:0000269" key="5">
    <source>
    </source>
</evidence>
<evidence type="ECO:0000269" key="6">
    <source>
    </source>
</evidence>
<evidence type="ECO:0000303" key="7">
    <source>
    </source>
</evidence>
<evidence type="ECO:0000303" key="8">
    <source>
    </source>
</evidence>
<evidence type="ECO:0000305" key="9"/>
<evidence type="ECO:0000305" key="10">
    <source>
    </source>
</evidence>
<evidence type="ECO:0000312" key="11">
    <source>
        <dbReference type="Araport" id="AT1G63930"/>
    </source>
</evidence>
<evidence type="ECO:0000312" key="12">
    <source>
        <dbReference type="EMBL" id="AAG52457.1"/>
    </source>
</evidence>